<comment type="function">
    <text evidence="5 6 7">Epithelial cell-specific Ca(2+)-regulated actin-modifying protein that modulates the reorganization of microvillar actin filaments. Plays a role in the actin nucleation, actin filament bundle assembly, actin filament capping and severing. Binds phosphatidylinositol 4,5-bisphosphate (PIP2) and lysophosphatidic acid (LPA); binds LPA with higher affinity than PIP2. Binding to LPA increases its phosphorylation by SRC and inhibits all actin-modifying activities. Binding to PIP2 inhibits actin-capping and -severing activities but enhances actin-bundling activity. Regulates the intestinal epithelial cell morphology, cell invasion, cell migration and apoptosis. Protects against apoptosis induced by dextran sodium sulfate (DSS) in the gastrointestinal epithelium. Appears to regulate cell death by maintaining mitochondrial integrity. Enhances hepatocyte growth factor (HGF)-induced epithelial cell motility, chemotaxis and wound repair. Upon S.flexneri cell infection, its actin-severing activity enhances actin-based motility of the bacteria and plays a role during the dissemination.</text>
</comment>
<comment type="subunit">
    <text evidence="1">Monomer. Homodimer; homodimerization is necessary for actin-bundling. Associates with F-actin; phosphorylation at tyrosine residues decreases the association with F-actin. Interacts (phosphorylated at C-terminus tyrosine phosphorylation sites) with PLCG1 (via the SH2 domains) (By similarity). Interacts (phosphorylated form) with PLCG1; the interaction is enhanced by hepatocyte growth factor (HGF).</text>
</comment>
<comment type="subcellular location">
    <subcellularLocation>
        <location evidence="1">Cytoplasm</location>
        <location evidence="1">Cytoskeleton</location>
    </subcellularLocation>
    <subcellularLocation>
        <location evidence="1">Cell projection</location>
        <location evidence="1">Microvillus</location>
    </subcellularLocation>
    <subcellularLocation>
        <location>Cell projection</location>
        <location>Lamellipodium</location>
    </subcellularLocation>
    <subcellularLocation>
        <location evidence="1">Cell projection</location>
        <location evidence="1">Ruffle</location>
    </subcellularLocation>
    <subcellularLocation>
        <location>Cell projection</location>
        <location>Filopodium tip</location>
    </subcellularLocation>
    <subcellularLocation>
        <location>Cell projection</location>
        <location>Filopodium</location>
    </subcellularLocation>
    <text evidence="1">Rapidly redistributed to ruffles and lamellipodia structures in response to autotaxin, lysophosphatidic acid (LPA) and epidermal growth factor (EGF) treatment (By similarity). Relocalized in the tip of cellular protrusions and filipodial extensions upon infection with S.flexneri in primary intestinal epithelial cells (IEC) and in the tail-like structures forming the actin comets of S.flexneri. Redistributed to the leading edge of hepatocyte growth factor (HGF)-induced lamellipodia.</text>
</comment>
<comment type="tissue specificity">
    <text evidence="4 6">Expressed in small intestin, colon, kidney and enterocytes (at protein level).</text>
</comment>
<comment type="domain">
    <text evidence="1">Consists of a large core fragment in the N-terminal portion and a small headpiece (HP) in the C-terminal portion. The core fragment is necessary for both actin-nucleating and -severing activities, whereas the HP binds F-actin strongly in both the presence and absence of calcium and is necessary in actin-bundling activity. The Gelsolin-like 1 repeat is necessary for the actin-capping activity. The entire core fragment is necessary for the actin-severing activity. Two major calcium-sensitive sites are involved in conformational changes and determine separate functional properties: the first site (Glu-25, Asp-44 and Glu-74) regulates the actin-capping and actin-severing activities; while the second site (Asp-61, Asp-86 and Ala-93) regulates only the actin-severing activity (By similarity).</text>
</comment>
<comment type="PTM">
    <text evidence="1">Phosphorylated on tyrosine residues by SRC. The unphosphorylated form increases the initial rate of actin-nucleating activity, whereas the tyrosine phosphorylated form inhibits actin-nucleating activity, enhances actin-bundling activity and enhances actin-severing activity by reducing high Ca(2+) requirements. The tyrosine phosphorylated form does not regulate actin-capping activity. Tyrosine phosphorylation is essential for cell migration: tyrosine phosphorylation sites in the N-terminus half regulate actin reorganization and cell morphology, whereas tyrosine phosphorylation sites in the C-terminus half regulate cell migration via interaction with PLCG1 (By similarity). Tyrosine phosphorylation is induced by epidermal growth factor (EGF) and stimulates cell migration.</text>
</comment>
<comment type="disruption phenotype">
    <text evidence="4 5 6 7">Mice are viable and fertile. The ultrastructure of the intestinal brush border is normal. Show increase epithelial cell apoptosis and are more sensitive to extran sodium sulfate-induced colitis. Newborn mice inoculated with S.flexneri are not susceptible to infection; cell invasion and intestinal inflammation were not observed, even though bacteria were seen in large number in the intestinal lumen, close to the intestinal epithelial cells (IEC) brush border.</text>
</comment>
<comment type="similarity">
    <text evidence="8">Belongs to the villin/gelsolin family.</text>
</comment>
<evidence type="ECO:0000250" key="1"/>
<evidence type="ECO:0000250" key="2">
    <source>
        <dbReference type="UniProtKB" id="P09327"/>
    </source>
</evidence>
<evidence type="ECO:0000255" key="3">
    <source>
        <dbReference type="PROSITE-ProRule" id="PRU00595"/>
    </source>
</evidence>
<evidence type="ECO:0000269" key="4">
    <source>
    </source>
</evidence>
<evidence type="ECO:0000269" key="5">
    <source>
    </source>
</evidence>
<evidence type="ECO:0000269" key="6">
    <source>
    </source>
</evidence>
<evidence type="ECO:0000269" key="7">
    <source>
    </source>
</evidence>
<evidence type="ECO:0000305" key="8"/>
<evidence type="ECO:0007744" key="9">
    <source>
    </source>
</evidence>
<reference key="1">
    <citation type="journal article" date="1992" name="Dev. Biol.">
        <title>Expression and localization of villin, fimbrin, and myosin I in differentiating mouse F9 teratocarcinoma cells.</title>
        <authorList>
            <person name="Ezzell R.M."/>
            <person name="Leung J."/>
            <person name="Collins K."/>
            <person name="Chafel M.M."/>
            <person name="Cardozo T.J."/>
            <person name="Matsudaira P.T."/>
        </authorList>
    </citation>
    <scope>NUCLEOTIDE SEQUENCE [MRNA]</scope>
</reference>
<reference key="2">
    <citation type="journal article" date="2004" name="Genome Res.">
        <title>The status, quality, and expansion of the NIH full-length cDNA project: the Mammalian Gene Collection (MGC).</title>
        <authorList>
            <consortium name="The MGC Project Team"/>
        </authorList>
    </citation>
    <scope>NUCLEOTIDE SEQUENCE [LARGE SCALE MRNA]</scope>
    <source>
        <strain>FVB/N</strain>
        <tissue>Brain</tissue>
        <tissue>Kidney</tissue>
    </source>
</reference>
<reference key="3">
    <citation type="journal article" date="1999" name="J. Cell Biol.">
        <title>In vivo, villin is required for Ca(2+)-dependent F-actin disruption in intestinal brush borders.</title>
        <authorList>
            <person name="Ferrary E."/>
            <person name="Cohen-Tannoudji M."/>
            <person name="Pehau-Arnaudet G."/>
            <person name="Lapillonne A."/>
            <person name="Athman R."/>
            <person name="Ruiz T."/>
            <person name="Boulouha L."/>
            <person name="El Marjou F."/>
            <person name="Doye A."/>
            <person name="Fontaine J.J."/>
            <person name="Antony C."/>
            <person name="Babinet C."/>
            <person name="Louvard D."/>
            <person name="Jaisser F."/>
            <person name="Robine S."/>
        </authorList>
    </citation>
    <scope>DISRUPTION PHENOTYPE</scope>
    <scope>SUBCELLULAR LOCATION</scope>
    <scope>TISSUE SPECIFICITY</scope>
</reference>
<reference key="4">
    <citation type="journal article" date="2003" name="Mol. Biol. Cell">
        <title>Villin enhances hepatocyte growth factor-induced actin cytoskeleton remodeling in epithelial cells.</title>
        <authorList>
            <person name="Athman R."/>
            <person name="Louvard D."/>
            <person name="Robine S."/>
        </authorList>
    </citation>
    <scope>FUNCTION</scope>
    <scope>TYROSINE PHOSPHORYLATION</scope>
    <scope>DISRUPTION PHENOTYPE</scope>
    <scope>SUBCELLULAR LOCATION</scope>
</reference>
<reference key="5">
    <citation type="journal article" date="2005" name="Cell. Microbiol.">
        <title>Shigella flexneri infection is dependent on villin in the mouse intestine and in primary cultures of intestinal epithelial cells.</title>
        <authorList>
            <person name="Athman R."/>
            <person name="Fernandez M.I."/>
            <person name="Gounon P."/>
            <person name="Sansonetti P."/>
            <person name="Louvard D."/>
            <person name="Philpott D."/>
            <person name="Robine S."/>
        </authorList>
    </citation>
    <scope>FUNCTION IN SHIGELLA FLEXNERI INFECTION</scope>
    <scope>DISRUPTION PHENOTYPE</scope>
    <scope>SUBCELLULAR LOCATION</scope>
    <scope>TISSUE SPECIFICITY</scope>
</reference>
<reference key="6">
    <citation type="journal article" date="2008" name="J. Biol. Chem.">
        <title>A novel role for villin in intestinal epithelial cell survival and homeostasis.</title>
        <authorList>
            <person name="Wang Y."/>
            <person name="Srinivasan K."/>
            <person name="Siddiqui M.R."/>
            <person name="George S.P."/>
            <person name="Tomar A."/>
            <person name="Khurana S."/>
        </authorList>
    </citation>
    <scope>FUNCTION</scope>
    <scope>DISRUPTION PHENOTYPE</scope>
</reference>
<reference key="7">
    <citation type="journal article" date="2010" name="Cell">
        <title>A tissue-specific atlas of mouse protein phosphorylation and expression.</title>
        <authorList>
            <person name="Huttlin E.L."/>
            <person name="Jedrychowski M.P."/>
            <person name="Elias J.E."/>
            <person name="Goswami T."/>
            <person name="Rad R."/>
            <person name="Beausoleil S.A."/>
            <person name="Villen J."/>
            <person name="Haas W."/>
            <person name="Sowa M.E."/>
            <person name="Gygi S.P."/>
        </authorList>
    </citation>
    <scope>PHOSPHORYLATION [LARGE SCALE ANALYSIS] AT SER-735 AND SER-776</scope>
    <scope>IDENTIFICATION BY MASS SPECTROMETRY [LARGE SCALE ANALYSIS]</scope>
    <source>
        <tissue>Kidney</tissue>
    </source>
</reference>
<dbReference type="EMBL" id="M98454">
    <property type="protein sequence ID" value="AAA40554.1"/>
    <property type="molecule type" value="mRNA"/>
</dbReference>
<dbReference type="EMBL" id="BC117875">
    <property type="protein sequence ID" value="AAI17876.1"/>
    <property type="molecule type" value="mRNA"/>
</dbReference>
<dbReference type="EMBL" id="BC145671">
    <property type="protein sequence ID" value="AAI45672.1"/>
    <property type="molecule type" value="mRNA"/>
</dbReference>
<dbReference type="EMBL" id="BC015267">
    <property type="protein sequence ID" value="AAH15267.1"/>
    <property type="molecule type" value="mRNA"/>
</dbReference>
<dbReference type="CCDS" id="CCDS15049.1"/>
<dbReference type="RefSeq" id="NP_033535.2">
    <property type="nucleotide sequence ID" value="NM_009509.2"/>
</dbReference>
<dbReference type="SMR" id="Q62468"/>
<dbReference type="BioGRID" id="204521">
    <property type="interactions" value="3"/>
</dbReference>
<dbReference type="FunCoup" id="Q62468">
    <property type="interactions" value="76"/>
</dbReference>
<dbReference type="IntAct" id="Q62468">
    <property type="interactions" value="5"/>
</dbReference>
<dbReference type="STRING" id="10090.ENSMUSP00000027366"/>
<dbReference type="iPTMnet" id="Q62468"/>
<dbReference type="MetOSite" id="Q62468"/>
<dbReference type="PhosphoSitePlus" id="Q62468"/>
<dbReference type="jPOST" id="Q62468"/>
<dbReference type="PaxDb" id="10090-ENSMUSP00000027366"/>
<dbReference type="PeptideAtlas" id="Q62468"/>
<dbReference type="ProteomicsDB" id="297912"/>
<dbReference type="Antibodypedia" id="1531">
    <property type="antibodies" value="770 antibodies from 41 providers"/>
</dbReference>
<dbReference type="DNASU" id="22349"/>
<dbReference type="Ensembl" id="ENSMUST00000027366.13">
    <property type="protein sequence ID" value="ENSMUSP00000027366.7"/>
    <property type="gene ID" value="ENSMUSG00000026175.13"/>
</dbReference>
<dbReference type="GeneID" id="22349"/>
<dbReference type="KEGG" id="mmu:22349"/>
<dbReference type="UCSC" id="uc007bmb.2">
    <property type="organism name" value="mouse"/>
</dbReference>
<dbReference type="AGR" id="MGI:98930"/>
<dbReference type="CTD" id="7429"/>
<dbReference type="MGI" id="MGI:98930">
    <property type="gene designation" value="Vil1"/>
</dbReference>
<dbReference type="VEuPathDB" id="HostDB:ENSMUSG00000026175"/>
<dbReference type="eggNOG" id="KOG0443">
    <property type="taxonomic scope" value="Eukaryota"/>
</dbReference>
<dbReference type="GeneTree" id="ENSGT00940000160544"/>
<dbReference type="HOGENOM" id="CLU_002568_3_1_1"/>
<dbReference type="InParanoid" id="Q62468"/>
<dbReference type="OMA" id="EPASFWV"/>
<dbReference type="OrthoDB" id="6375767at2759"/>
<dbReference type="PhylomeDB" id="Q62468"/>
<dbReference type="TreeFam" id="TF313468"/>
<dbReference type="BioGRID-ORCS" id="22349">
    <property type="hits" value="1 hit in 79 CRISPR screens"/>
</dbReference>
<dbReference type="ChiTaRS" id="Vil1">
    <property type="organism name" value="mouse"/>
</dbReference>
<dbReference type="PRO" id="PR:Q62468"/>
<dbReference type="Proteomes" id="UP000000589">
    <property type="component" value="Chromosome 1"/>
</dbReference>
<dbReference type="RNAct" id="Q62468">
    <property type="molecule type" value="protein"/>
</dbReference>
<dbReference type="Bgee" id="ENSMUSG00000026175">
    <property type="expression patterns" value="Expressed in small intestine Peyer's patch and 91 other cell types or tissues"/>
</dbReference>
<dbReference type="ExpressionAtlas" id="Q62468">
    <property type="expression patterns" value="baseline and differential"/>
</dbReference>
<dbReference type="GO" id="GO:0032432">
    <property type="term" value="C:actin filament bundle"/>
    <property type="evidence" value="ECO:0000250"/>
    <property type="project" value="UniProtKB"/>
</dbReference>
<dbReference type="GO" id="GO:0005903">
    <property type="term" value="C:brush border"/>
    <property type="evidence" value="ECO:0000314"/>
    <property type="project" value="UniProtKB"/>
</dbReference>
<dbReference type="GO" id="GO:0005737">
    <property type="term" value="C:cytoplasm"/>
    <property type="evidence" value="ECO:0007669"/>
    <property type="project" value="UniProtKB-KW"/>
</dbReference>
<dbReference type="GO" id="GO:0030175">
    <property type="term" value="C:filopodium"/>
    <property type="evidence" value="ECO:0000314"/>
    <property type="project" value="UniProtKB"/>
</dbReference>
<dbReference type="GO" id="GO:0032433">
    <property type="term" value="C:filopodium tip"/>
    <property type="evidence" value="ECO:0000314"/>
    <property type="project" value="UniProtKB"/>
</dbReference>
<dbReference type="GO" id="GO:0030027">
    <property type="term" value="C:lamellipodium"/>
    <property type="evidence" value="ECO:0000314"/>
    <property type="project" value="UniProtKB"/>
</dbReference>
<dbReference type="GO" id="GO:0005902">
    <property type="term" value="C:microvillus"/>
    <property type="evidence" value="ECO:0000314"/>
    <property type="project" value="MGI"/>
</dbReference>
<dbReference type="GO" id="GO:0005886">
    <property type="term" value="C:plasma membrane"/>
    <property type="evidence" value="ECO:0007669"/>
    <property type="project" value="Ensembl"/>
</dbReference>
<dbReference type="GO" id="GO:0001726">
    <property type="term" value="C:ruffle"/>
    <property type="evidence" value="ECO:0000250"/>
    <property type="project" value="UniProtKB"/>
</dbReference>
<dbReference type="GO" id="GO:0051015">
    <property type="term" value="F:actin filament binding"/>
    <property type="evidence" value="ECO:0000250"/>
    <property type="project" value="UniProtKB"/>
</dbReference>
<dbReference type="GO" id="GO:0005509">
    <property type="term" value="F:calcium ion binding"/>
    <property type="evidence" value="ECO:0000250"/>
    <property type="project" value="UniProtKB"/>
</dbReference>
<dbReference type="GO" id="GO:0043027">
    <property type="term" value="F:cysteine-type endopeptidase inhibitor activity involved in apoptotic process"/>
    <property type="evidence" value="ECO:0000315"/>
    <property type="project" value="UniProtKB"/>
</dbReference>
<dbReference type="GO" id="GO:0035727">
    <property type="term" value="F:lysophosphatidic acid binding"/>
    <property type="evidence" value="ECO:0000250"/>
    <property type="project" value="UniProtKB"/>
</dbReference>
<dbReference type="GO" id="GO:0005546">
    <property type="term" value="F:phosphatidylinositol-4,5-bisphosphate binding"/>
    <property type="evidence" value="ECO:0000250"/>
    <property type="project" value="UniProtKB"/>
</dbReference>
<dbReference type="GO" id="GO:0042803">
    <property type="term" value="F:protein homodimerization activity"/>
    <property type="evidence" value="ECO:0000250"/>
    <property type="project" value="UniProtKB"/>
</dbReference>
<dbReference type="GO" id="GO:0051693">
    <property type="term" value="P:actin filament capping"/>
    <property type="evidence" value="ECO:0000250"/>
    <property type="project" value="UniProtKB"/>
</dbReference>
<dbReference type="GO" id="GO:0030042">
    <property type="term" value="P:actin filament depolymerization"/>
    <property type="evidence" value="ECO:0000250"/>
    <property type="project" value="UniProtKB"/>
</dbReference>
<dbReference type="GO" id="GO:0030041">
    <property type="term" value="P:actin filament polymerization"/>
    <property type="evidence" value="ECO:0000250"/>
    <property type="project" value="UniProtKB"/>
</dbReference>
<dbReference type="GO" id="GO:0051014">
    <property type="term" value="P:actin filament severing"/>
    <property type="evidence" value="ECO:0007669"/>
    <property type="project" value="Ensembl"/>
</dbReference>
<dbReference type="GO" id="GO:0006915">
    <property type="term" value="P:apoptotic process"/>
    <property type="evidence" value="ECO:0007669"/>
    <property type="project" value="UniProtKB-KW"/>
</dbReference>
<dbReference type="GO" id="GO:0051016">
    <property type="term" value="P:barbed-end actin filament capping"/>
    <property type="evidence" value="ECO:0007669"/>
    <property type="project" value="Ensembl"/>
</dbReference>
<dbReference type="GO" id="GO:0071364">
    <property type="term" value="P:cellular response to epidermal growth factor stimulus"/>
    <property type="evidence" value="ECO:0000250"/>
    <property type="project" value="UniProtKB"/>
</dbReference>
<dbReference type="GO" id="GO:0035729">
    <property type="term" value="P:cellular response to hepatocyte growth factor stimulus"/>
    <property type="evidence" value="ECO:0000314"/>
    <property type="project" value="UniProtKB"/>
</dbReference>
<dbReference type="GO" id="GO:0060327">
    <property type="term" value="P:cytoplasmic actin-based contraction involved in cell motility"/>
    <property type="evidence" value="ECO:0007669"/>
    <property type="project" value="Ensembl"/>
</dbReference>
<dbReference type="GO" id="GO:0007173">
    <property type="term" value="P:epidermal growth factor receptor signaling pathway"/>
    <property type="evidence" value="ECO:0000250"/>
    <property type="project" value="UniProtKB"/>
</dbReference>
<dbReference type="GO" id="GO:0030855">
    <property type="term" value="P:epithelial cell differentiation"/>
    <property type="evidence" value="ECO:0007669"/>
    <property type="project" value="Ensembl"/>
</dbReference>
<dbReference type="GO" id="GO:0001951">
    <property type="term" value="P:intestinal D-glucose absorption"/>
    <property type="evidence" value="ECO:0000316"/>
    <property type="project" value="UniProtKB"/>
</dbReference>
<dbReference type="GO" id="GO:0032233">
    <property type="term" value="P:positive regulation of actin filament bundle assembly"/>
    <property type="evidence" value="ECO:0000250"/>
    <property type="project" value="UniProtKB"/>
</dbReference>
<dbReference type="GO" id="GO:0030836">
    <property type="term" value="P:positive regulation of actin filament depolymerization"/>
    <property type="evidence" value="ECO:0007669"/>
    <property type="project" value="Ensembl"/>
</dbReference>
<dbReference type="GO" id="GO:0030335">
    <property type="term" value="P:positive regulation of cell migration"/>
    <property type="evidence" value="ECO:0000250"/>
    <property type="project" value="UniProtKB"/>
</dbReference>
<dbReference type="GO" id="GO:0010634">
    <property type="term" value="P:positive regulation of epithelial cell migration"/>
    <property type="evidence" value="ECO:0000250"/>
    <property type="project" value="UniProtKB"/>
</dbReference>
<dbReference type="GO" id="GO:2000394">
    <property type="term" value="P:positive regulation of lamellipodium morphogenesis"/>
    <property type="evidence" value="ECO:0007669"/>
    <property type="project" value="Ensembl"/>
</dbReference>
<dbReference type="GO" id="GO:0040018">
    <property type="term" value="P:positive regulation of multicellular organism growth"/>
    <property type="evidence" value="ECO:0000316"/>
    <property type="project" value="UniProtKB"/>
</dbReference>
<dbReference type="GO" id="GO:1903078">
    <property type="term" value="P:positive regulation of protein localization to plasma membrane"/>
    <property type="evidence" value="ECO:0000316"/>
    <property type="project" value="UniProtKB"/>
</dbReference>
<dbReference type="GO" id="GO:0051125">
    <property type="term" value="P:regulation of actin nucleation"/>
    <property type="evidence" value="ECO:0000250"/>
    <property type="project" value="UniProtKB"/>
</dbReference>
<dbReference type="GO" id="GO:0008360">
    <property type="term" value="P:regulation of cell shape"/>
    <property type="evidence" value="ECO:0000250"/>
    <property type="project" value="UniProtKB"/>
</dbReference>
<dbReference type="GO" id="GO:2000392">
    <property type="term" value="P:regulation of lamellipodium morphogenesis"/>
    <property type="evidence" value="ECO:0000314"/>
    <property type="project" value="UniProtKB"/>
</dbReference>
<dbReference type="GO" id="GO:0032532">
    <property type="term" value="P:regulation of microvillus length"/>
    <property type="evidence" value="ECO:0000316"/>
    <property type="project" value="UniProtKB"/>
</dbReference>
<dbReference type="GO" id="GO:0061041">
    <property type="term" value="P:regulation of wound healing"/>
    <property type="evidence" value="ECO:0000314"/>
    <property type="project" value="UniProtKB"/>
</dbReference>
<dbReference type="GO" id="GO:0009617">
    <property type="term" value="P:response to bacterium"/>
    <property type="evidence" value="ECO:0007669"/>
    <property type="project" value="Ensembl"/>
</dbReference>
<dbReference type="GO" id="GO:1902896">
    <property type="term" value="P:terminal web assembly"/>
    <property type="evidence" value="ECO:0000316"/>
    <property type="project" value="UniProtKB"/>
</dbReference>
<dbReference type="CDD" id="cd11290">
    <property type="entry name" value="gelsolin_S1_like"/>
    <property type="match status" value="1"/>
</dbReference>
<dbReference type="CDD" id="cd11289">
    <property type="entry name" value="gelsolin_S2_like"/>
    <property type="match status" value="1"/>
</dbReference>
<dbReference type="CDD" id="cd11292">
    <property type="entry name" value="gelsolin_S3_like"/>
    <property type="match status" value="1"/>
</dbReference>
<dbReference type="CDD" id="cd11293">
    <property type="entry name" value="gelsolin_S4_like"/>
    <property type="match status" value="1"/>
</dbReference>
<dbReference type="CDD" id="cd11288">
    <property type="entry name" value="gelsolin_S5_like"/>
    <property type="match status" value="1"/>
</dbReference>
<dbReference type="CDD" id="cd11291">
    <property type="entry name" value="gelsolin_S6_like"/>
    <property type="match status" value="1"/>
</dbReference>
<dbReference type="FunFam" id="3.40.20.10:FF:000001">
    <property type="entry name" value="Gelsolin"/>
    <property type="match status" value="1"/>
</dbReference>
<dbReference type="FunFam" id="3.40.20.10:FF:000002">
    <property type="entry name" value="Gelsolin"/>
    <property type="match status" value="1"/>
</dbReference>
<dbReference type="FunFam" id="3.40.20.10:FF:000004">
    <property type="entry name" value="Gelsolin"/>
    <property type="match status" value="1"/>
</dbReference>
<dbReference type="FunFam" id="3.40.20.10:FF:000005">
    <property type="entry name" value="Gelsolin"/>
    <property type="match status" value="1"/>
</dbReference>
<dbReference type="FunFam" id="3.40.20.10:FF:000027">
    <property type="entry name" value="Villin 1"/>
    <property type="match status" value="1"/>
</dbReference>
<dbReference type="FunFam" id="1.10.950.10:FF:000005">
    <property type="entry name" value="Villin-1"/>
    <property type="match status" value="1"/>
</dbReference>
<dbReference type="FunFam" id="3.40.20.10:FF:000035">
    <property type="entry name" value="Villin-1"/>
    <property type="match status" value="1"/>
</dbReference>
<dbReference type="Gene3D" id="3.40.20.10">
    <property type="entry name" value="Severin"/>
    <property type="match status" value="6"/>
</dbReference>
<dbReference type="Gene3D" id="1.10.950.10">
    <property type="entry name" value="Villin headpiece domain"/>
    <property type="match status" value="1"/>
</dbReference>
<dbReference type="InterPro" id="IPR029006">
    <property type="entry name" value="ADF-H/Gelsolin-like_dom_sf"/>
</dbReference>
<dbReference type="InterPro" id="IPR007123">
    <property type="entry name" value="Gelsolin-like_dom"/>
</dbReference>
<dbReference type="InterPro" id="IPR036180">
    <property type="entry name" value="Gelsolin-like_dom_sf"/>
</dbReference>
<dbReference type="InterPro" id="IPR007122">
    <property type="entry name" value="Villin/Gelsolin"/>
</dbReference>
<dbReference type="InterPro" id="IPR003128">
    <property type="entry name" value="Villin_headpiece"/>
</dbReference>
<dbReference type="InterPro" id="IPR036886">
    <property type="entry name" value="Villin_headpiece_dom_sf"/>
</dbReference>
<dbReference type="PANTHER" id="PTHR11977">
    <property type="entry name" value="VILLIN"/>
    <property type="match status" value="1"/>
</dbReference>
<dbReference type="PANTHER" id="PTHR11977:SF35">
    <property type="entry name" value="VILLIN-1"/>
    <property type="match status" value="1"/>
</dbReference>
<dbReference type="Pfam" id="PF00626">
    <property type="entry name" value="Gelsolin"/>
    <property type="match status" value="6"/>
</dbReference>
<dbReference type="Pfam" id="PF02209">
    <property type="entry name" value="VHP"/>
    <property type="match status" value="1"/>
</dbReference>
<dbReference type="PRINTS" id="PR00597">
    <property type="entry name" value="GELSOLIN"/>
</dbReference>
<dbReference type="SMART" id="SM00262">
    <property type="entry name" value="GEL"/>
    <property type="match status" value="6"/>
</dbReference>
<dbReference type="SMART" id="SM00153">
    <property type="entry name" value="VHP"/>
    <property type="match status" value="1"/>
</dbReference>
<dbReference type="SUPFAM" id="SSF55753">
    <property type="entry name" value="Actin depolymerizing proteins"/>
    <property type="match status" value="4"/>
</dbReference>
<dbReference type="SUPFAM" id="SSF82754">
    <property type="entry name" value="C-terminal, gelsolin-like domain of Sec23/24"/>
    <property type="match status" value="2"/>
</dbReference>
<dbReference type="SUPFAM" id="SSF47050">
    <property type="entry name" value="VHP, Villin headpiece domain"/>
    <property type="match status" value="1"/>
</dbReference>
<dbReference type="PROSITE" id="PS51089">
    <property type="entry name" value="HP"/>
    <property type="match status" value="1"/>
</dbReference>
<gene>
    <name type="primary">Vil1</name>
    <name type="synonym">Vil</name>
</gene>
<organism>
    <name type="scientific">Mus musculus</name>
    <name type="common">Mouse</name>
    <dbReference type="NCBI Taxonomy" id="10090"/>
    <lineage>
        <taxon>Eukaryota</taxon>
        <taxon>Metazoa</taxon>
        <taxon>Chordata</taxon>
        <taxon>Craniata</taxon>
        <taxon>Vertebrata</taxon>
        <taxon>Euteleostomi</taxon>
        <taxon>Mammalia</taxon>
        <taxon>Eutheria</taxon>
        <taxon>Euarchontoglires</taxon>
        <taxon>Glires</taxon>
        <taxon>Rodentia</taxon>
        <taxon>Myomorpha</taxon>
        <taxon>Muroidea</taxon>
        <taxon>Muridae</taxon>
        <taxon>Murinae</taxon>
        <taxon>Mus</taxon>
        <taxon>Mus</taxon>
    </lineage>
</organism>
<sequence>MTKLNAQVKGSLNITTPGIQIWRIEAMQMVPVPSSTFGSFFDGDCYVVLAIHKTSSTLSYDIHYWIGQDSSQDEQGAAAIYTTQMDDYLKGRAVQHREVQGNESETFRSYFKQGLVIRKGGVASGMKHVETNSCDVQRLLHVKGKRNVLAGEVEMSWKSFNRGDVFLLDLGKLIIQWNGPESNRMERLRGMALAKEIRDQERGGRTYVGVVDGEKEGDSPQLMAIMNHVLGPRKELKAAISDSVVEPAAKAALKLYHVSDSEGKLVVREVATRPLTQDLLKHEDCYILDQGGLKIFVWKGKNANAQERSGAMSQALNFIKAKQYPPSTQVEVQNDGAESPIFQQLFQKWTVPNRTSGLGKTHTVGSVAKVEQVKFDALTMHVQPQVAAQQKMVDDGSGEVQVWRIEDLELVPVESKWLGHFYGGDCYLLLYTYLIGEKQHYLLYIWQGSQASQDEIAASAYQAVLLDQKYNDEPVQIRVTMGKEPPHLMSIFKGRMVVYQGGTSRKNNLEPVPSTRLFQVRGTNADNTKAFEVTARATSLNSNDVFILKTPSCCYLWCGKGCSGDEREMAKMVADTISRTEKQVVVEGQEPANFWMALGGKAPYANTKRLQEENQVITPRLFECSNQTGRFLATEIFDFNQDDLEEEDVFLLDVWDQVFFWIGKHANEEEKKAAATTVQEYLKTHPGNRDLETPIIVVKQGHEPPTFTGWFLAWDPFKWSNTKSYDDLKAELGNSGDWSQIADEVMSPKVDVFTANTSLSSGPLPTFPLEQLVNKSVEDLPEGVDPSRKEEHLSTEDFTRALGMTPAAFSALPRWKQQNIKKEKGLF</sequence>
<keyword id="KW-0117">Actin capping</keyword>
<keyword id="KW-0009">Actin-binding</keyword>
<keyword id="KW-0053">Apoptosis</keyword>
<keyword id="KW-0106">Calcium</keyword>
<keyword id="KW-0966">Cell projection</keyword>
<keyword id="KW-0963">Cytoplasm</keyword>
<keyword id="KW-0206">Cytoskeleton</keyword>
<keyword id="KW-0479">Metal-binding</keyword>
<keyword id="KW-0597">Phosphoprotein</keyword>
<keyword id="KW-1185">Reference proteome</keyword>
<keyword id="KW-0677">Repeat</keyword>
<accession>Q62468</accession>
<accession>Q149B6</accession>
<accession>Q91WH4</accession>
<proteinExistence type="evidence at protein level"/>
<protein>
    <recommendedName>
        <fullName>Villin-1</fullName>
    </recommendedName>
</protein>
<name>VILI_MOUSE</name>
<feature type="chain" id="PRO_0000218728" description="Villin-1">
    <location>
        <begin position="1"/>
        <end position="827"/>
    </location>
</feature>
<feature type="repeat" description="Gelsolin-like 1">
    <location>
        <begin position="27"/>
        <end position="76"/>
    </location>
</feature>
<feature type="repeat" description="Gelsolin-like 2">
    <location>
        <begin position="148"/>
        <end position="188"/>
    </location>
</feature>
<feature type="repeat" description="Gelsolin-like 3">
    <location>
        <begin position="265"/>
        <end position="309"/>
    </location>
</feature>
<feature type="repeat" description="Gelsolin-like 4">
    <location>
        <begin position="407"/>
        <end position="457"/>
    </location>
</feature>
<feature type="repeat" description="Gelsolin-like 5">
    <location>
        <begin position="528"/>
        <end position="568"/>
    </location>
</feature>
<feature type="repeat" description="Gelsolin-like 6">
    <location>
        <begin position="631"/>
        <end position="672"/>
    </location>
</feature>
<feature type="domain" description="HP" evidence="3">
    <location>
        <begin position="761"/>
        <end position="827"/>
    </location>
</feature>
<feature type="region of interest" description="Core">
    <location>
        <begin position="1"/>
        <end position="734"/>
    </location>
</feature>
<feature type="region of interest" description="Necessary for homodimerization" evidence="1">
    <location>
        <begin position="1"/>
        <end position="126"/>
    </location>
</feature>
<feature type="region of interest" description="LPA/PIP2-binding site 1" evidence="1">
    <location>
        <begin position="112"/>
        <end position="119"/>
    </location>
</feature>
<feature type="region of interest" description="LPA/PIP2-binding site 2" evidence="1">
    <location>
        <begin position="138"/>
        <end position="146"/>
    </location>
</feature>
<feature type="region of interest" description="Headpiece">
    <location>
        <begin position="735"/>
        <end position="827"/>
    </location>
</feature>
<feature type="region of interest" description="LPA/PIP2-binding site 3" evidence="1">
    <location>
        <begin position="816"/>
        <end position="824"/>
    </location>
</feature>
<feature type="modified residue" description="Phosphoserine" evidence="2">
    <location>
        <position position="366"/>
    </location>
</feature>
<feature type="modified residue" description="Phosphoserine" evidence="9">
    <location>
        <position position="735"/>
    </location>
</feature>
<feature type="modified residue" description="Phosphoserine" evidence="9">
    <location>
        <position position="776"/>
    </location>
</feature>
<feature type="sequence conflict" description="In Ref. 1; AAA40554." evidence="8" ref="1">
    <original>A</original>
    <variation>P</variation>
    <location>
        <position position="192"/>
    </location>
</feature>